<keyword id="KW-0067">ATP-binding</keyword>
<keyword id="KW-0436">Ligase</keyword>
<keyword id="KW-0547">Nucleotide-binding</keyword>
<keyword id="KW-0648">Protein biosynthesis</keyword>
<keyword id="KW-1185">Reference proteome</keyword>
<protein>
    <recommendedName>
        <fullName evidence="1">Glutamyl-tRNA(Gln) amidotransferase subunit A</fullName>
        <shortName evidence="1">Glu-ADT subunit A</shortName>
        <ecNumber evidence="1">6.3.5.7</ecNumber>
    </recommendedName>
</protein>
<accession>A5CEC8</accession>
<organism>
    <name type="scientific">Orientia tsutsugamushi (strain Boryong)</name>
    <name type="common">Rickettsia tsutsugamushi</name>
    <dbReference type="NCBI Taxonomy" id="357244"/>
    <lineage>
        <taxon>Bacteria</taxon>
        <taxon>Pseudomonadati</taxon>
        <taxon>Pseudomonadota</taxon>
        <taxon>Alphaproteobacteria</taxon>
        <taxon>Rickettsiales</taxon>
        <taxon>Rickettsiaceae</taxon>
        <taxon>Rickettsieae</taxon>
        <taxon>Orientia</taxon>
    </lineage>
</organism>
<feature type="chain" id="PRO_1000015877" description="Glutamyl-tRNA(Gln) amidotransferase subunit A">
    <location>
        <begin position="1"/>
        <end position="492"/>
    </location>
</feature>
<feature type="active site" description="Charge relay system" evidence="1">
    <location>
        <position position="78"/>
    </location>
</feature>
<feature type="active site" description="Charge relay system" evidence="1">
    <location>
        <position position="158"/>
    </location>
</feature>
<feature type="active site" description="Acyl-ester intermediate" evidence="1">
    <location>
        <position position="182"/>
    </location>
</feature>
<gene>
    <name evidence="1" type="primary">gatA</name>
    <name type="ordered locus">OTBS_1367</name>
</gene>
<dbReference type="EC" id="6.3.5.7" evidence="1"/>
<dbReference type="EMBL" id="AM494475">
    <property type="protein sequence ID" value="CAM80433.1"/>
    <property type="molecule type" value="Genomic_DNA"/>
</dbReference>
<dbReference type="RefSeq" id="WP_011944872.1">
    <property type="nucleotide sequence ID" value="NC_009488.1"/>
</dbReference>
<dbReference type="SMR" id="A5CEC8"/>
<dbReference type="KEGG" id="ots:OTBS_1367"/>
<dbReference type="eggNOG" id="COG0154">
    <property type="taxonomic scope" value="Bacteria"/>
</dbReference>
<dbReference type="HOGENOM" id="CLU_009600_0_3_5"/>
<dbReference type="Proteomes" id="UP000001565">
    <property type="component" value="Chromosome"/>
</dbReference>
<dbReference type="GO" id="GO:0030956">
    <property type="term" value="C:glutamyl-tRNA(Gln) amidotransferase complex"/>
    <property type="evidence" value="ECO:0007669"/>
    <property type="project" value="InterPro"/>
</dbReference>
<dbReference type="GO" id="GO:0005524">
    <property type="term" value="F:ATP binding"/>
    <property type="evidence" value="ECO:0007669"/>
    <property type="project" value="UniProtKB-KW"/>
</dbReference>
<dbReference type="GO" id="GO:0050567">
    <property type="term" value="F:glutaminyl-tRNA synthase (glutamine-hydrolyzing) activity"/>
    <property type="evidence" value="ECO:0007669"/>
    <property type="project" value="UniProtKB-UniRule"/>
</dbReference>
<dbReference type="GO" id="GO:0006412">
    <property type="term" value="P:translation"/>
    <property type="evidence" value="ECO:0007669"/>
    <property type="project" value="UniProtKB-UniRule"/>
</dbReference>
<dbReference type="Gene3D" id="3.90.1300.10">
    <property type="entry name" value="Amidase signature (AS) domain"/>
    <property type="match status" value="1"/>
</dbReference>
<dbReference type="HAMAP" id="MF_00120">
    <property type="entry name" value="GatA"/>
    <property type="match status" value="1"/>
</dbReference>
<dbReference type="InterPro" id="IPR000120">
    <property type="entry name" value="Amidase"/>
</dbReference>
<dbReference type="InterPro" id="IPR020556">
    <property type="entry name" value="Amidase_CS"/>
</dbReference>
<dbReference type="InterPro" id="IPR023631">
    <property type="entry name" value="Amidase_dom"/>
</dbReference>
<dbReference type="InterPro" id="IPR036928">
    <property type="entry name" value="AS_sf"/>
</dbReference>
<dbReference type="InterPro" id="IPR004412">
    <property type="entry name" value="GatA"/>
</dbReference>
<dbReference type="NCBIfam" id="TIGR00132">
    <property type="entry name" value="gatA"/>
    <property type="match status" value="1"/>
</dbReference>
<dbReference type="PANTHER" id="PTHR11895:SF151">
    <property type="entry name" value="GLUTAMYL-TRNA(GLN) AMIDOTRANSFERASE SUBUNIT A"/>
    <property type="match status" value="1"/>
</dbReference>
<dbReference type="PANTHER" id="PTHR11895">
    <property type="entry name" value="TRANSAMIDASE"/>
    <property type="match status" value="1"/>
</dbReference>
<dbReference type="Pfam" id="PF01425">
    <property type="entry name" value="Amidase"/>
    <property type="match status" value="1"/>
</dbReference>
<dbReference type="SUPFAM" id="SSF75304">
    <property type="entry name" value="Amidase signature (AS) enzymes"/>
    <property type="match status" value="1"/>
</dbReference>
<dbReference type="PROSITE" id="PS00571">
    <property type="entry name" value="AMIDASES"/>
    <property type="match status" value="1"/>
</dbReference>
<name>GATA_ORITB</name>
<evidence type="ECO:0000255" key="1">
    <source>
        <dbReference type="HAMAP-Rule" id="MF_00120"/>
    </source>
</evidence>
<sequence>MNNLVKLTISQAVSGLKNKEFTATDLVTAHINQMDKYRYINSYITEIPELALQAAKKSDFLIQNNQARPIEGIPVSIKDLFCTKGILTTAASKMLQNFTPVYDATAYSKIINAGGIMLGKGNMDEFAMGSANINSYFGNVINPWKAESDDVDLTPGGSSGGSSAAVAAFMAMAALGSDTGGSVRQPASYTGTVGIKPSYGRCSRWGMIAFSCSLDQPGVITRTVEDAAIMLEIMMGYDEKDSTSLNAEVPNLRSAVNQPIKGMKIGIPYDLMENRSLSSEIITMWQNTINLLKDHGVEIVSIGLPYINYALPVYYVLSSAEASSNLARYDGVRYGLRVEGKDSNINEIYELSRSEGFGAEVKRRIMMGTYALASTNINSYYIKAQQVRRLIVNDFTNSFNKVDCILIPSAPTAAFPLNSNQDDPVTMYLNDILTIPASLAGLPCISIPAGFSANKLPLGMQVIGSRLDEYNIIKISSAIEKALNLKFIPKGF</sequence>
<proteinExistence type="inferred from homology"/>
<comment type="function">
    <text evidence="1">Allows the formation of correctly charged Gln-tRNA(Gln) through the transamidation of misacylated Glu-tRNA(Gln) in organisms which lack glutaminyl-tRNA synthetase. The reaction takes place in the presence of glutamine and ATP through an activated gamma-phospho-Glu-tRNA(Gln).</text>
</comment>
<comment type="catalytic activity">
    <reaction evidence="1">
        <text>L-glutamyl-tRNA(Gln) + L-glutamine + ATP + H2O = L-glutaminyl-tRNA(Gln) + L-glutamate + ADP + phosphate + H(+)</text>
        <dbReference type="Rhea" id="RHEA:17521"/>
        <dbReference type="Rhea" id="RHEA-COMP:9681"/>
        <dbReference type="Rhea" id="RHEA-COMP:9684"/>
        <dbReference type="ChEBI" id="CHEBI:15377"/>
        <dbReference type="ChEBI" id="CHEBI:15378"/>
        <dbReference type="ChEBI" id="CHEBI:29985"/>
        <dbReference type="ChEBI" id="CHEBI:30616"/>
        <dbReference type="ChEBI" id="CHEBI:43474"/>
        <dbReference type="ChEBI" id="CHEBI:58359"/>
        <dbReference type="ChEBI" id="CHEBI:78520"/>
        <dbReference type="ChEBI" id="CHEBI:78521"/>
        <dbReference type="ChEBI" id="CHEBI:456216"/>
        <dbReference type="EC" id="6.3.5.7"/>
    </reaction>
</comment>
<comment type="subunit">
    <text evidence="1">Heterotrimer of A, B and C subunits.</text>
</comment>
<comment type="similarity">
    <text evidence="1">Belongs to the amidase family. GatA subfamily.</text>
</comment>
<reference key="1">
    <citation type="journal article" date="2007" name="Proc. Natl. Acad. Sci. U.S.A.">
        <title>The Orientia tsutsugamushi genome reveals massive proliferation of conjugative type IV secretion system and host-cell interaction genes.</title>
        <authorList>
            <person name="Cho N.-H."/>
            <person name="Kim H.-R."/>
            <person name="Lee J.-H."/>
            <person name="Kim S.-Y."/>
            <person name="Kim J."/>
            <person name="Cha S."/>
            <person name="Kim S.-Y."/>
            <person name="Darby A.C."/>
            <person name="Fuxelius H.-H."/>
            <person name="Yin J."/>
            <person name="Kim J.H."/>
            <person name="Kim J."/>
            <person name="Lee S.J."/>
            <person name="Koh Y.-S."/>
            <person name="Jang W.-J."/>
            <person name="Park K.-H."/>
            <person name="Andersson S.G.E."/>
            <person name="Choi M.-S."/>
            <person name="Kim I.-S."/>
        </authorList>
    </citation>
    <scope>NUCLEOTIDE SEQUENCE [LARGE SCALE GENOMIC DNA]</scope>
    <source>
        <strain>Boryong</strain>
    </source>
</reference>